<evidence type="ECO:0000250" key="1"/>
<evidence type="ECO:0000250" key="2">
    <source>
        <dbReference type="UniProtKB" id="P00157"/>
    </source>
</evidence>
<evidence type="ECO:0000255" key="3">
    <source>
        <dbReference type="PROSITE-ProRule" id="PRU00967"/>
    </source>
</evidence>
<evidence type="ECO:0000255" key="4">
    <source>
        <dbReference type="PROSITE-ProRule" id="PRU00968"/>
    </source>
</evidence>
<organism>
    <name type="scientific">Sminthopsis crassicaudata</name>
    <name type="common">Fat-tailed dunnart</name>
    <name type="synonym">Phascogale crassicaudata</name>
    <dbReference type="NCBI Taxonomy" id="9301"/>
    <lineage>
        <taxon>Eukaryota</taxon>
        <taxon>Metazoa</taxon>
        <taxon>Chordata</taxon>
        <taxon>Craniata</taxon>
        <taxon>Vertebrata</taxon>
        <taxon>Euteleostomi</taxon>
        <taxon>Mammalia</taxon>
        <taxon>Metatheria</taxon>
        <taxon>Dasyuromorphia</taxon>
        <taxon>Dasyuridae</taxon>
        <taxon>Sminthopsis</taxon>
    </lineage>
</organism>
<comment type="function">
    <text evidence="2">Component of the ubiquinol-cytochrome c reductase complex (complex III or cytochrome b-c1 complex) that is part of the mitochondrial respiratory chain. The b-c1 complex mediates electron transfer from ubiquinol to cytochrome c. Contributes to the generation of a proton gradient across the mitochondrial membrane that is then used for ATP synthesis.</text>
</comment>
<comment type="cofactor">
    <cofactor evidence="2">
        <name>heme b</name>
        <dbReference type="ChEBI" id="CHEBI:60344"/>
    </cofactor>
    <text evidence="2">Binds 2 heme b groups non-covalently.</text>
</comment>
<comment type="subunit">
    <text evidence="2">The cytochrome bc1 complex contains 11 subunits: 3 respiratory subunits (MT-CYB, CYC1 and UQCRFS1), 2 core proteins (UQCRC1 and UQCRC2) and 6 low-molecular weight proteins (UQCRH/QCR6, UQCRB/QCR7, UQCRQ/QCR8, UQCR10/QCR9, UQCR11/QCR10 and a cleavage product of UQCRFS1). This cytochrome bc1 complex then forms a dimer.</text>
</comment>
<comment type="subcellular location">
    <subcellularLocation>
        <location evidence="2">Mitochondrion inner membrane</location>
        <topology evidence="2">Multi-pass membrane protein</topology>
    </subcellularLocation>
</comment>
<comment type="miscellaneous">
    <text evidence="1">Heme 1 (or BL or b562) is low-potential and absorbs at about 562 nm, and heme 2 (or BH or b566) is high-potential and absorbs at about 566 nm.</text>
</comment>
<comment type="similarity">
    <text evidence="3 4">Belongs to the cytochrome b family.</text>
</comment>
<comment type="caution">
    <text evidence="2">The full-length protein contains only eight transmembrane helices, not nine as predicted by bioinformatics tools.</text>
</comment>
<proteinExistence type="inferred from homology"/>
<gene>
    <name type="primary">MT-CYB</name>
    <name type="synonym">COB</name>
    <name type="synonym">CYTB</name>
    <name type="synonym">MTCYB</name>
</gene>
<dbReference type="EMBL" id="M99463">
    <property type="protein sequence ID" value="AAB40872.1"/>
    <property type="molecule type" value="Genomic_DNA"/>
</dbReference>
<dbReference type="SMR" id="Q35810"/>
<dbReference type="GO" id="GO:0005743">
    <property type="term" value="C:mitochondrial inner membrane"/>
    <property type="evidence" value="ECO:0007669"/>
    <property type="project" value="UniProtKB-SubCell"/>
</dbReference>
<dbReference type="GO" id="GO:0045275">
    <property type="term" value="C:respiratory chain complex III"/>
    <property type="evidence" value="ECO:0007669"/>
    <property type="project" value="InterPro"/>
</dbReference>
<dbReference type="GO" id="GO:0046872">
    <property type="term" value="F:metal ion binding"/>
    <property type="evidence" value="ECO:0007669"/>
    <property type="project" value="UniProtKB-KW"/>
</dbReference>
<dbReference type="GO" id="GO:0008121">
    <property type="term" value="F:ubiquinol-cytochrome-c reductase activity"/>
    <property type="evidence" value="ECO:0007669"/>
    <property type="project" value="InterPro"/>
</dbReference>
<dbReference type="GO" id="GO:0006122">
    <property type="term" value="P:mitochondrial electron transport, ubiquinol to cytochrome c"/>
    <property type="evidence" value="ECO:0007669"/>
    <property type="project" value="TreeGrafter"/>
</dbReference>
<dbReference type="CDD" id="cd00290">
    <property type="entry name" value="cytochrome_b_C"/>
    <property type="match status" value="1"/>
</dbReference>
<dbReference type="CDD" id="cd00284">
    <property type="entry name" value="Cytochrome_b_N"/>
    <property type="match status" value="1"/>
</dbReference>
<dbReference type="FunFam" id="1.20.810.10:FF:000002">
    <property type="entry name" value="Cytochrome b"/>
    <property type="match status" value="1"/>
</dbReference>
<dbReference type="Gene3D" id="1.20.810.10">
    <property type="entry name" value="Cytochrome Bc1 Complex, Chain C"/>
    <property type="match status" value="1"/>
</dbReference>
<dbReference type="InterPro" id="IPR005798">
    <property type="entry name" value="Cyt_b/b6_C"/>
</dbReference>
<dbReference type="InterPro" id="IPR036150">
    <property type="entry name" value="Cyt_b/b6_C_sf"/>
</dbReference>
<dbReference type="InterPro" id="IPR005797">
    <property type="entry name" value="Cyt_b/b6_N"/>
</dbReference>
<dbReference type="InterPro" id="IPR027387">
    <property type="entry name" value="Cytb/b6-like_sf"/>
</dbReference>
<dbReference type="InterPro" id="IPR030689">
    <property type="entry name" value="Cytochrome_b"/>
</dbReference>
<dbReference type="InterPro" id="IPR048260">
    <property type="entry name" value="Cytochrome_b_C_euk/bac"/>
</dbReference>
<dbReference type="InterPro" id="IPR048259">
    <property type="entry name" value="Cytochrome_b_N_euk/bac"/>
</dbReference>
<dbReference type="InterPro" id="IPR016174">
    <property type="entry name" value="Di-haem_cyt_TM"/>
</dbReference>
<dbReference type="PANTHER" id="PTHR19271">
    <property type="entry name" value="CYTOCHROME B"/>
    <property type="match status" value="1"/>
</dbReference>
<dbReference type="PANTHER" id="PTHR19271:SF16">
    <property type="entry name" value="CYTOCHROME B"/>
    <property type="match status" value="1"/>
</dbReference>
<dbReference type="Pfam" id="PF00032">
    <property type="entry name" value="Cytochrom_B_C"/>
    <property type="match status" value="1"/>
</dbReference>
<dbReference type="Pfam" id="PF00033">
    <property type="entry name" value="Cytochrome_B"/>
    <property type="match status" value="1"/>
</dbReference>
<dbReference type="PIRSF" id="PIRSF038885">
    <property type="entry name" value="COB"/>
    <property type="match status" value="1"/>
</dbReference>
<dbReference type="SUPFAM" id="SSF81648">
    <property type="entry name" value="a domain/subunit of cytochrome bc1 complex (Ubiquinol-cytochrome c reductase)"/>
    <property type="match status" value="1"/>
</dbReference>
<dbReference type="SUPFAM" id="SSF81342">
    <property type="entry name" value="Transmembrane di-heme cytochromes"/>
    <property type="match status" value="1"/>
</dbReference>
<dbReference type="PROSITE" id="PS51003">
    <property type="entry name" value="CYTB_CTER"/>
    <property type="match status" value="1"/>
</dbReference>
<dbReference type="PROSITE" id="PS51002">
    <property type="entry name" value="CYTB_NTER"/>
    <property type="match status" value="1"/>
</dbReference>
<geneLocation type="mitochondrion"/>
<feature type="chain" id="PRO_0000061542" description="Cytochrome b">
    <location>
        <begin position="1"/>
        <end position="381"/>
    </location>
</feature>
<feature type="transmembrane region" description="Helical" evidence="2">
    <location>
        <begin position="33"/>
        <end position="53"/>
    </location>
</feature>
<feature type="transmembrane region" description="Helical" evidence="2">
    <location>
        <begin position="77"/>
        <end position="98"/>
    </location>
</feature>
<feature type="transmembrane region" description="Helical" evidence="2">
    <location>
        <begin position="113"/>
        <end position="133"/>
    </location>
</feature>
<feature type="transmembrane region" description="Helical" evidence="2">
    <location>
        <begin position="178"/>
        <end position="198"/>
    </location>
</feature>
<feature type="transmembrane region" description="Helical" evidence="2">
    <location>
        <begin position="226"/>
        <end position="246"/>
    </location>
</feature>
<feature type="transmembrane region" description="Helical" evidence="2">
    <location>
        <begin position="288"/>
        <end position="308"/>
    </location>
</feature>
<feature type="transmembrane region" description="Helical" evidence="2">
    <location>
        <begin position="320"/>
        <end position="340"/>
    </location>
</feature>
<feature type="transmembrane region" description="Helical" evidence="2">
    <location>
        <begin position="347"/>
        <end position="367"/>
    </location>
</feature>
<feature type="binding site" description="axial binding residue" evidence="2">
    <location>
        <position position="83"/>
    </location>
    <ligand>
        <name>heme b</name>
        <dbReference type="ChEBI" id="CHEBI:60344"/>
        <label>b562</label>
    </ligand>
    <ligandPart>
        <name>Fe</name>
        <dbReference type="ChEBI" id="CHEBI:18248"/>
    </ligandPart>
</feature>
<feature type="binding site" description="axial binding residue" evidence="2">
    <location>
        <position position="97"/>
    </location>
    <ligand>
        <name>heme b</name>
        <dbReference type="ChEBI" id="CHEBI:60344"/>
        <label>b566</label>
    </ligand>
    <ligandPart>
        <name>Fe</name>
        <dbReference type="ChEBI" id="CHEBI:18248"/>
    </ligandPart>
</feature>
<feature type="binding site" description="axial binding residue" evidence="2">
    <location>
        <position position="182"/>
    </location>
    <ligand>
        <name>heme b</name>
        <dbReference type="ChEBI" id="CHEBI:60344"/>
        <label>b562</label>
    </ligand>
    <ligandPart>
        <name>Fe</name>
        <dbReference type="ChEBI" id="CHEBI:18248"/>
    </ligandPart>
</feature>
<feature type="binding site" description="axial binding residue" evidence="2">
    <location>
        <position position="196"/>
    </location>
    <ligand>
        <name>heme b</name>
        <dbReference type="ChEBI" id="CHEBI:60344"/>
        <label>b566</label>
    </ligand>
    <ligandPart>
        <name>Fe</name>
        <dbReference type="ChEBI" id="CHEBI:18248"/>
    </ligandPart>
</feature>
<feature type="binding site" evidence="2">
    <location>
        <position position="201"/>
    </location>
    <ligand>
        <name>a ubiquinone</name>
        <dbReference type="ChEBI" id="CHEBI:16389"/>
    </ligand>
</feature>
<reference key="1">
    <citation type="journal article" date="1992" name="Proc. R. Soc. B">
        <title>Phylogenetic relationships of the thylacine (Mammalia: Thylacinidae) among dasyuroid marsupials: evidence from cytochrome b DNA sequences.</title>
        <authorList>
            <person name="Krajewski C."/>
            <person name="Driskell A.C."/>
            <person name="Baverstock P.R."/>
            <person name="Braun M.J."/>
        </authorList>
    </citation>
    <scope>NUCLEOTIDE SEQUENCE [GENOMIC DNA]</scope>
</reference>
<sequence length="381" mass="42700">MTNLRKTHPLMKIINHSFIDLPAPSNISAWWNFGSLLGVCLMIQILTGLFLAMHYTSDTLTAFSSVAHICRDVNYGWLIRNLHANGASMFFMCLFLHVGRGIYYGSYLYKETWNIGVILLLTVMATAFVGYVLPWGQMSFWGATVITNLLSAIPYIGTTLAEWIWGGFSVDKATLTRFFAFHFILPFIIAALVIVHLLFLHGTGSSNPSGINPDSDKIPFHPYFTIKDALGCMLLLLVLLSLALFSPDSLGDPDNFSPANPLSTPPHIKPEWYFLFAYAILRSIPNKLGGVLALLASILILLIIPFLHTANQRSMMFRPISQTLFWILTANLMTLTWIGGQPVEQPFIIIGQLASISYFMLIVIFMPFAGSFENYMLKPKW</sequence>
<name>CYB_SMICR</name>
<keyword id="KW-0249">Electron transport</keyword>
<keyword id="KW-0349">Heme</keyword>
<keyword id="KW-0408">Iron</keyword>
<keyword id="KW-0472">Membrane</keyword>
<keyword id="KW-0479">Metal-binding</keyword>
<keyword id="KW-0496">Mitochondrion</keyword>
<keyword id="KW-0999">Mitochondrion inner membrane</keyword>
<keyword id="KW-0679">Respiratory chain</keyword>
<keyword id="KW-0812">Transmembrane</keyword>
<keyword id="KW-1133">Transmembrane helix</keyword>
<keyword id="KW-0813">Transport</keyword>
<keyword id="KW-0830">Ubiquinone</keyword>
<protein>
    <recommendedName>
        <fullName>Cytochrome b</fullName>
    </recommendedName>
    <alternativeName>
        <fullName>Complex III subunit 3</fullName>
    </alternativeName>
    <alternativeName>
        <fullName>Complex III subunit III</fullName>
    </alternativeName>
    <alternativeName>
        <fullName>Cytochrome b-c1 complex subunit 3</fullName>
    </alternativeName>
    <alternativeName>
        <fullName>Ubiquinol-cytochrome-c reductase complex cytochrome b subunit</fullName>
    </alternativeName>
</protein>
<accession>Q35810</accession>